<feature type="chain" id="PRO_0000272901" description="Large ribosomal subunit protein uL23cz/uL23cy">
    <location>
        <begin position="1"/>
        <end position="93"/>
    </location>
</feature>
<proteinExistence type="inferred from homology"/>
<sequence>MDGIKYVVVTDKSIRLLVKNQYTSNVESGSTRTEIKHWVELFFGVKVIAMNSHRLPGKGRRMGPIMGHTMHYRRMIITLQPGYSIPPLRTKRT</sequence>
<keyword id="KW-0150">Chloroplast</keyword>
<keyword id="KW-0934">Plastid</keyword>
<keyword id="KW-1185">Reference proteome</keyword>
<keyword id="KW-0687">Ribonucleoprotein</keyword>
<keyword id="KW-0689">Ribosomal protein</keyword>
<keyword id="KW-0694">RNA-binding</keyword>
<keyword id="KW-0699">rRNA-binding</keyword>
<comment type="function">
    <text evidence="1">Binds to 23S rRNA.</text>
</comment>
<comment type="subunit">
    <text evidence="1">Part of the 50S ribosomal subunit.</text>
</comment>
<comment type="subcellular location">
    <subcellularLocation>
        <location>Plastid</location>
        <location>Chloroplast</location>
    </subcellularLocation>
</comment>
<comment type="similarity">
    <text evidence="2">Belongs to the universal ribosomal protein uL23 family.</text>
</comment>
<accession>Q2L943</accession>
<name>RK23_GOSHI</name>
<gene>
    <name type="primary">rpl23-A</name>
</gene>
<gene>
    <name type="primary">rpl23-B</name>
</gene>
<evidence type="ECO:0000250" key="1"/>
<evidence type="ECO:0000305" key="2"/>
<protein>
    <recommendedName>
        <fullName evidence="2">Large ribosomal subunit protein uL23cz/uL23cy</fullName>
    </recommendedName>
    <alternativeName>
        <fullName>50S ribosomal protein L23, chloroplastic</fullName>
    </alternativeName>
</protein>
<organism>
    <name type="scientific">Gossypium hirsutum</name>
    <name type="common">Upland cotton</name>
    <name type="synonym">Gossypium mexicanum</name>
    <dbReference type="NCBI Taxonomy" id="3635"/>
    <lineage>
        <taxon>Eukaryota</taxon>
        <taxon>Viridiplantae</taxon>
        <taxon>Streptophyta</taxon>
        <taxon>Embryophyta</taxon>
        <taxon>Tracheophyta</taxon>
        <taxon>Spermatophyta</taxon>
        <taxon>Magnoliopsida</taxon>
        <taxon>eudicotyledons</taxon>
        <taxon>Gunneridae</taxon>
        <taxon>Pentapetalae</taxon>
        <taxon>rosids</taxon>
        <taxon>malvids</taxon>
        <taxon>Malvales</taxon>
        <taxon>Malvaceae</taxon>
        <taxon>Malvoideae</taxon>
        <taxon>Gossypium</taxon>
    </lineage>
</organism>
<geneLocation type="chloroplast"/>
<reference key="1">
    <citation type="journal article" date="2006" name="BMC Genomics">
        <title>The complete chloroplast genome sequence of Gossypium hirsutum: organization and phylogenetic relationships to other angiosperms.</title>
        <authorList>
            <person name="Lee S.-B."/>
            <person name="Kaittanis C."/>
            <person name="Jansen R.K."/>
            <person name="Hostetler J.B."/>
            <person name="Tallon L.J."/>
            <person name="Town C.D."/>
            <person name="Daniell H."/>
        </authorList>
    </citation>
    <scope>NUCLEOTIDE SEQUENCE [LARGE SCALE GENOMIC DNA]</scope>
    <source>
        <strain>cv. Coker 310FR</strain>
    </source>
</reference>
<dbReference type="EMBL" id="DQ345959">
    <property type="protein sequence ID" value="ABC73668.1"/>
    <property type="molecule type" value="Genomic_DNA"/>
</dbReference>
<dbReference type="EMBL" id="DQ345959">
    <property type="protein sequence ID" value="ABC73691.1"/>
    <property type="molecule type" value="Genomic_DNA"/>
</dbReference>
<dbReference type="SMR" id="Q2L943"/>
<dbReference type="KEGG" id="ghi:3989168"/>
<dbReference type="KEGG" id="ghi:3989224"/>
<dbReference type="OMA" id="MEENGFM"/>
<dbReference type="OrthoDB" id="3818at41938"/>
<dbReference type="Proteomes" id="UP000189702">
    <property type="component" value="Unplaced"/>
</dbReference>
<dbReference type="GO" id="GO:0009507">
    <property type="term" value="C:chloroplast"/>
    <property type="evidence" value="ECO:0007669"/>
    <property type="project" value="UniProtKB-SubCell"/>
</dbReference>
<dbReference type="GO" id="GO:1990904">
    <property type="term" value="C:ribonucleoprotein complex"/>
    <property type="evidence" value="ECO:0007669"/>
    <property type="project" value="UniProtKB-KW"/>
</dbReference>
<dbReference type="GO" id="GO:0005840">
    <property type="term" value="C:ribosome"/>
    <property type="evidence" value="ECO:0007669"/>
    <property type="project" value="UniProtKB-KW"/>
</dbReference>
<dbReference type="GO" id="GO:0003729">
    <property type="term" value="F:mRNA binding"/>
    <property type="evidence" value="ECO:0007669"/>
    <property type="project" value="UniProtKB-ARBA"/>
</dbReference>
<dbReference type="GO" id="GO:0019843">
    <property type="term" value="F:rRNA binding"/>
    <property type="evidence" value="ECO:0007669"/>
    <property type="project" value="UniProtKB-UniRule"/>
</dbReference>
<dbReference type="GO" id="GO:0003735">
    <property type="term" value="F:structural constituent of ribosome"/>
    <property type="evidence" value="ECO:0007669"/>
    <property type="project" value="InterPro"/>
</dbReference>
<dbReference type="GO" id="GO:0006412">
    <property type="term" value="P:translation"/>
    <property type="evidence" value="ECO:0007669"/>
    <property type="project" value="UniProtKB-UniRule"/>
</dbReference>
<dbReference type="FunFam" id="3.30.70.330:FF:000002">
    <property type="entry name" value="50S ribosomal protein L23, chloroplastic"/>
    <property type="match status" value="1"/>
</dbReference>
<dbReference type="Gene3D" id="3.30.70.330">
    <property type="match status" value="1"/>
</dbReference>
<dbReference type="HAMAP" id="MF_01369_B">
    <property type="entry name" value="Ribosomal_uL23_B"/>
    <property type="match status" value="1"/>
</dbReference>
<dbReference type="InterPro" id="IPR012677">
    <property type="entry name" value="Nucleotide-bd_a/b_plait_sf"/>
</dbReference>
<dbReference type="InterPro" id="IPR013025">
    <property type="entry name" value="Ribosomal_uL23-like"/>
</dbReference>
<dbReference type="InterPro" id="IPR012678">
    <property type="entry name" value="Ribosomal_uL23/eL15/eS24_sf"/>
</dbReference>
<dbReference type="InterPro" id="IPR001014">
    <property type="entry name" value="Ribosomal_uL23_CS"/>
</dbReference>
<dbReference type="PANTHER" id="PTHR11620">
    <property type="entry name" value="60S RIBOSOMAL PROTEIN L23A"/>
    <property type="match status" value="1"/>
</dbReference>
<dbReference type="Pfam" id="PF00276">
    <property type="entry name" value="Ribosomal_L23"/>
    <property type="match status" value="1"/>
</dbReference>
<dbReference type="SUPFAM" id="SSF54189">
    <property type="entry name" value="Ribosomal proteins S24e, L23 and L15e"/>
    <property type="match status" value="1"/>
</dbReference>
<dbReference type="PROSITE" id="PS00050">
    <property type="entry name" value="RIBOSOMAL_L23"/>
    <property type="match status" value="1"/>
</dbReference>